<organism>
    <name type="scientific">Xylella fastidiosa (strain M12)</name>
    <dbReference type="NCBI Taxonomy" id="405440"/>
    <lineage>
        <taxon>Bacteria</taxon>
        <taxon>Pseudomonadati</taxon>
        <taxon>Pseudomonadota</taxon>
        <taxon>Gammaproteobacteria</taxon>
        <taxon>Lysobacterales</taxon>
        <taxon>Lysobacteraceae</taxon>
        <taxon>Xylella</taxon>
    </lineage>
</organism>
<reference key="1">
    <citation type="journal article" date="2010" name="J. Bacteriol.">
        <title>Whole genome sequences of two Xylella fastidiosa strains (M12 and M23) causing almond leaf scorch disease in California.</title>
        <authorList>
            <person name="Chen J."/>
            <person name="Xie G."/>
            <person name="Han S."/>
            <person name="Chertkov O."/>
            <person name="Sims D."/>
            <person name="Civerolo E.L."/>
        </authorList>
    </citation>
    <scope>NUCLEOTIDE SEQUENCE [LARGE SCALE GENOMIC DNA]</scope>
    <source>
        <strain>M12</strain>
    </source>
</reference>
<evidence type="ECO:0000255" key="1">
    <source>
        <dbReference type="HAMAP-Rule" id="MF_00072"/>
    </source>
</evidence>
<accession>B0U262</accession>
<comment type="function">
    <text evidence="1">Increases the formation of ribosomal termination complexes and stimulates activities of RF-1 and RF-2. It binds guanine nucleotides and has strong preference for UGA stop codons. It may interact directly with the ribosome. The stimulation of RF-1 and RF-2 is significantly reduced by GTP and GDP, but not by GMP.</text>
</comment>
<comment type="subcellular location">
    <subcellularLocation>
        <location evidence="1">Cytoplasm</location>
    </subcellularLocation>
</comment>
<comment type="similarity">
    <text evidence="1">Belongs to the TRAFAC class translation factor GTPase superfamily. Classic translation factor GTPase family. PrfC subfamily.</text>
</comment>
<name>RF3_XYLFM</name>
<dbReference type="EMBL" id="CP000941">
    <property type="protein sequence ID" value="ACA11184.1"/>
    <property type="molecule type" value="Genomic_DNA"/>
</dbReference>
<dbReference type="RefSeq" id="WP_004085050.1">
    <property type="nucleotide sequence ID" value="NC_010513.1"/>
</dbReference>
<dbReference type="SMR" id="B0U262"/>
<dbReference type="KEGG" id="xfm:Xfasm12_0147"/>
<dbReference type="HOGENOM" id="CLU_002794_2_1_6"/>
<dbReference type="GO" id="GO:0005829">
    <property type="term" value="C:cytosol"/>
    <property type="evidence" value="ECO:0007669"/>
    <property type="project" value="TreeGrafter"/>
</dbReference>
<dbReference type="GO" id="GO:0005525">
    <property type="term" value="F:GTP binding"/>
    <property type="evidence" value="ECO:0007669"/>
    <property type="project" value="UniProtKB-UniRule"/>
</dbReference>
<dbReference type="GO" id="GO:0003924">
    <property type="term" value="F:GTPase activity"/>
    <property type="evidence" value="ECO:0007669"/>
    <property type="project" value="InterPro"/>
</dbReference>
<dbReference type="GO" id="GO:0097216">
    <property type="term" value="F:guanosine tetraphosphate binding"/>
    <property type="evidence" value="ECO:0007669"/>
    <property type="project" value="UniProtKB-ARBA"/>
</dbReference>
<dbReference type="GO" id="GO:0016150">
    <property type="term" value="F:translation release factor activity, codon nonspecific"/>
    <property type="evidence" value="ECO:0007669"/>
    <property type="project" value="TreeGrafter"/>
</dbReference>
<dbReference type="GO" id="GO:0016149">
    <property type="term" value="F:translation release factor activity, codon specific"/>
    <property type="evidence" value="ECO:0007669"/>
    <property type="project" value="UniProtKB-UniRule"/>
</dbReference>
<dbReference type="GO" id="GO:0006449">
    <property type="term" value="P:regulation of translational termination"/>
    <property type="evidence" value="ECO:0007669"/>
    <property type="project" value="UniProtKB-UniRule"/>
</dbReference>
<dbReference type="CDD" id="cd04169">
    <property type="entry name" value="RF3"/>
    <property type="match status" value="1"/>
</dbReference>
<dbReference type="CDD" id="cd03689">
    <property type="entry name" value="RF3_II"/>
    <property type="match status" value="1"/>
</dbReference>
<dbReference type="CDD" id="cd16259">
    <property type="entry name" value="RF3_III"/>
    <property type="match status" value="1"/>
</dbReference>
<dbReference type="FunFam" id="3.30.70.3280:FF:000001">
    <property type="entry name" value="Peptide chain release factor 3"/>
    <property type="match status" value="1"/>
</dbReference>
<dbReference type="FunFam" id="3.40.50.300:FF:000542">
    <property type="entry name" value="Peptide chain release factor 3"/>
    <property type="match status" value="1"/>
</dbReference>
<dbReference type="Gene3D" id="3.40.50.300">
    <property type="entry name" value="P-loop containing nucleotide triphosphate hydrolases"/>
    <property type="match status" value="2"/>
</dbReference>
<dbReference type="Gene3D" id="3.30.70.3280">
    <property type="entry name" value="Peptide chain release factor 3, domain III"/>
    <property type="match status" value="1"/>
</dbReference>
<dbReference type="HAMAP" id="MF_00072">
    <property type="entry name" value="Rel_fac_3"/>
    <property type="match status" value="1"/>
</dbReference>
<dbReference type="InterPro" id="IPR053905">
    <property type="entry name" value="EF-G-like_DII"/>
</dbReference>
<dbReference type="InterPro" id="IPR035647">
    <property type="entry name" value="EFG_III/V"/>
</dbReference>
<dbReference type="InterPro" id="IPR031157">
    <property type="entry name" value="G_TR_CS"/>
</dbReference>
<dbReference type="InterPro" id="IPR027417">
    <property type="entry name" value="P-loop_NTPase"/>
</dbReference>
<dbReference type="InterPro" id="IPR004548">
    <property type="entry name" value="PrfC"/>
</dbReference>
<dbReference type="InterPro" id="IPR032090">
    <property type="entry name" value="RF3_C"/>
</dbReference>
<dbReference type="InterPro" id="IPR038467">
    <property type="entry name" value="RF3_dom_3_sf"/>
</dbReference>
<dbReference type="InterPro" id="IPR041732">
    <property type="entry name" value="RF3_GTP-bd"/>
</dbReference>
<dbReference type="InterPro" id="IPR005225">
    <property type="entry name" value="Small_GTP-bd"/>
</dbReference>
<dbReference type="InterPro" id="IPR000795">
    <property type="entry name" value="T_Tr_GTP-bd_dom"/>
</dbReference>
<dbReference type="InterPro" id="IPR009000">
    <property type="entry name" value="Transl_B-barrel_sf"/>
</dbReference>
<dbReference type="NCBIfam" id="TIGR00503">
    <property type="entry name" value="prfC"/>
    <property type="match status" value="1"/>
</dbReference>
<dbReference type="NCBIfam" id="NF001964">
    <property type="entry name" value="PRK00741.1"/>
    <property type="match status" value="1"/>
</dbReference>
<dbReference type="NCBIfam" id="TIGR00231">
    <property type="entry name" value="small_GTP"/>
    <property type="match status" value="1"/>
</dbReference>
<dbReference type="PANTHER" id="PTHR43556">
    <property type="entry name" value="PEPTIDE CHAIN RELEASE FACTOR RF3"/>
    <property type="match status" value="1"/>
</dbReference>
<dbReference type="PANTHER" id="PTHR43556:SF2">
    <property type="entry name" value="PEPTIDE CHAIN RELEASE FACTOR RF3"/>
    <property type="match status" value="1"/>
</dbReference>
<dbReference type="Pfam" id="PF22042">
    <property type="entry name" value="EF-G_D2"/>
    <property type="match status" value="1"/>
</dbReference>
<dbReference type="Pfam" id="PF00009">
    <property type="entry name" value="GTP_EFTU"/>
    <property type="match status" value="1"/>
</dbReference>
<dbReference type="Pfam" id="PF16658">
    <property type="entry name" value="RF3_C"/>
    <property type="match status" value="1"/>
</dbReference>
<dbReference type="PRINTS" id="PR00315">
    <property type="entry name" value="ELONGATNFCT"/>
</dbReference>
<dbReference type="SUPFAM" id="SSF54980">
    <property type="entry name" value="EF-G C-terminal domain-like"/>
    <property type="match status" value="1"/>
</dbReference>
<dbReference type="SUPFAM" id="SSF52540">
    <property type="entry name" value="P-loop containing nucleoside triphosphate hydrolases"/>
    <property type="match status" value="1"/>
</dbReference>
<dbReference type="SUPFAM" id="SSF50447">
    <property type="entry name" value="Translation proteins"/>
    <property type="match status" value="1"/>
</dbReference>
<dbReference type="PROSITE" id="PS00301">
    <property type="entry name" value="G_TR_1"/>
    <property type="match status" value="1"/>
</dbReference>
<dbReference type="PROSITE" id="PS51722">
    <property type="entry name" value="G_TR_2"/>
    <property type="match status" value="1"/>
</dbReference>
<protein>
    <recommendedName>
        <fullName evidence="1">Peptide chain release factor 3</fullName>
        <shortName evidence="1">RF-3</shortName>
    </recommendedName>
</protein>
<proteinExistence type="inferred from homology"/>
<gene>
    <name evidence="1" type="primary">prfC</name>
    <name type="ordered locus">Xfasm12_0147</name>
</gene>
<sequence length="534" mass="59315">MSEVVAETARRRTFAIISHPDAGKTTLTEKLLLFGGAIQMAGSVKSRKAVRHATSDWMTLEKERGISVTSSVMQFPYEGKIINLLDTPGHADFGEDTYRVLTAVDSALMVIDVAKGVEERTIKLMEVCRLRDTPIMTFINKLDREGKNPIELLDEVERVLGIQCAPVTWPIGMGKRLRGVVNLLTNEVHLYEPGRNFTRQDSTIFTSLEAPGLAERIGEQMLADLHEELELIQGASACFDPTEYLGGRQTPVFFGSGVNNFGVQPLLDFFVEHAPSPQQRDTTSRVVLPTEEKLTGFVFKIQANMDPQHRDRVAFMRVCSGRFTAGMKAFHVRSSKDLKLANALTFMASDRESVAEAFPGDVIGIHNHGRVSIGDTFTEGEVLSFTGIPSFAPELFRRACLGDPLKLKQLQKGLTQLSEEGATQFFRPLMSNDLILGAVGMLQFDVVAYRLKNEYGVDATFEPVSITTARWVYCDNSKTLEEFREKNVTNLAVDASGELVYLAPTRVNLQLAQERAPEIHFFATREHAYAVGVD</sequence>
<keyword id="KW-0963">Cytoplasm</keyword>
<keyword id="KW-0342">GTP-binding</keyword>
<keyword id="KW-0547">Nucleotide-binding</keyword>
<keyword id="KW-0648">Protein biosynthesis</keyword>
<feature type="chain" id="PRO_1000092513" description="Peptide chain release factor 3">
    <location>
        <begin position="1"/>
        <end position="534"/>
    </location>
</feature>
<feature type="domain" description="tr-type G">
    <location>
        <begin position="9"/>
        <end position="278"/>
    </location>
</feature>
<feature type="binding site" evidence="1">
    <location>
        <begin position="18"/>
        <end position="25"/>
    </location>
    <ligand>
        <name>GTP</name>
        <dbReference type="ChEBI" id="CHEBI:37565"/>
    </ligand>
</feature>
<feature type="binding site" evidence="1">
    <location>
        <begin position="86"/>
        <end position="90"/>
    </location>
    <ligand>
        <name>GTP</name>
        <dbReference type="ChEBI" id="CHEBI:37565"/>
    </ligand>
</feature>
<feature type="binding site" evidence="1">
    <location>
        <begin position="140"/>
        <end position="143"/>
    </location>
    <ligand>
        <name>GTP</name>
        <dbReference type="ChEBI" id="CHEBI:37565"/>
    </ligand>
</feature>